<gene>
    <name type="primary">fadD21</name>
    <name type="ordered locus">Rv1185c</name>
    <name type="ORF">MTV005.21c</name>
</gene>
<dbReference type="EC" id="6.2.1.-"/>
<dbReference type="EMBL" id="AL123456">
    <property type="protein sequence ID" value="CCP43941.1"/>
    <property type="molecule type" value="Genomic_DNA"/>
</dbReference>
<dbReference type="PIR" id="A70877">
    <property type="entry name" value="A70877"/>
</dbReference>
<dbReference type="RefSeq" id="NP_215701.1">
    <property type="nucleotide sequence ID" value="NC_000962.3"/>
</dbReference>
<dbReference type="RefSeq" id="WP_003406196.1">
    <property type="nucleotide sequence ID" value="NZ_NVQJ01000025.1"/>
</dbReference>
<dbReference type="SMR" id="P9WQ49"/>
<dbReference type="FunCoup" id="P9WQ49">
    <property type="interactions" value="9"/>
</dbReference>
<dbReference type="STRING" id="83332.Rv1185c"/>
<dbReference type="PaxDb" id="83332-Rv1185c"/>
<dbReference type="DNASU" id="886065"/>
<dbReference type="GeneID" id="886065"/>
<dbReference type="KEGG" id="mtu:Rv1185c"/>
<dbReference type="KEGG" id="mtv:RVBD_1185c"/>
<dbReference type="TubercuList" id="Rv1185c"/>
<dbReference type="eggNOG" id="COG0318">
    <property type="taxonomic scope" value="Bacteria"/>
</dbReference>
<dbReference type="InParanoid" id="P9WQ49"/>
<dbReference type="OrthoDB" id="3671040at2"/>
<dbReference type="PhylomeDB" id="P9WQ49"/>
<dbReference type="Proteomes" id="UP000001584">
    <property type="component" value="Chromosome"/>
</dbReference>
<dbReference type="GO" id="GO:0005886">
    <property type="term" value="C:plasma membrane"/>
    <property type="evidence" value="ECO:0007005"/>
    <property type="project" value="MTBBASE"/>
</dbReference>
<dbReference type="GO" id="GO:0070566">
    <property type="term" value="F:adenylyltransferase activity"/>
    <property type="evidence" value="ECO:0000318"/>
    <property type="project" value="GO_Central"/>
</dbReference>
<dbReference type="GO" id="GO:0016874">
    <property type="term" value="F:ligase activity"/>
    <property type="evidence" value="ECO:0007669"/>
    <property type="project" value="UniProtKB-KW"/>
</dbReference>
<dbReference type="GO" id="GO:0071766">
    <property type="term" value="P:Actinobacterium-type cell wall biogenesis"/>
    <property type="evidence" value="ECO:0007669"/>
    <property type="project" value="UniProtKB-ARBA"/>
</dbReference>
<dbReference type="GO" id="GO:0006633">
    <property type="term" value="P:fatty acid biosynthetic process"/>
    <property type="evidence" value="ECO:0000318"/>
    <property type="project" value="GO_Central"/>
</dbReference>
<dbReference type="CDD" id="cd05931">
    <property type="entry name" value="FAAL"/>
    <property type="match status" value="1"/>
</dbReference>
<dbReference type="FunFam" id="3.30.300.30:FF:000016">
    <property type="entry name" value="Fatty-acid-CoA ligase FadD26"/>
    <property type="match status" value="1"/>
</dbReference>
<dbReference type="FunFam" id="3.40.50.12780:FF:000013">
    <property type="entry name" value="Long-chain-fatty-acid--AMP ligase FadD32"/>
    <property type="match status" value="1"/>
</dbReference>
<dbReference type="Gene3D" id="3.30.300.30">
    <property type="match status" value="1"/>
</dbReference>
<dbReference type="Gene3D" id="3.40.50.12780">
    <property type="entry name" value="N-terminal domain of ligase-like"/>
    <property type="match status" value="1"/>
</dbReference>
<dbReference type="InterPro" id="IPR025110">
    <property type="entry name" value="AMP-bd_C"/>
</dbReference>
<dbReference type="InterPro" id="IPR045851">
    <property type="entry name" value="AMP-bd_C_sf"/>
</dbReference>
<dbReference type="InterPro" id="IPR000873">
    <property type="entry name" value="AMP-dep_synth/lig_dom"/>
</dbReference>
<dbReference type="InterPro" id="IPR042099">
    <property type="entry name" value="ANL_N_sf"/>
</dbReference>
<dbReference type="InterPro" id="IPR040097">
    <property type="entry name" value="FAAL/FAAC"/>
</dbReference>
<dbReference type="InterPro" id="IPR054928">
    <property type="entry name" value="FAAL_FadD21"/>
</dbReference>
<dbReference type="NCBIfam" id="NF038337">
    <property type="entry name" value="FAAL_FadD21"/>
    <property type="match status" value="1"/>
</dbReference>
<dbReference type="NCBIfam" id="NF004509">
    <property type="entry name" value="PRK05850.1"/>
    <property type="match status" value="1"/>
</dbReference>
<dbReference type="PANTHER" id="PTHR22754:SF32">
    <property type="entry name" value="DISCO-INTERACTING PROTEIN 2"/>
    <property type="match status" value="1"/>
</dbReference>
<dbReference type="PANTHER" id="PTHR22754">
    <property type="entry name" value="DISCO-INTERACTING PROTEIN 2 DIP2 -RELATED"/>
    <property type="match status" value="1"/>
</dbReference>
<dbReference type="Pfam" id="PF00501">
    <property type="entry name" value="AMP-binding"/>
    <property type="match status" value="1"/>
</dbReference>
<dbReference type="Pfam" id="PF23024">
    <property type="entry name" value="AMP-dom_DIP2-like"/>
    <property type="match status" value="1"/>
</dbReference>
<dbReference type="SUPFAM" id="SSF56801">
    <property type="entry name" value="Acetyl-CoA synthetase-like"/>
    <property type="match status" value="1"/>
</dbReference>
<proteinExistence type="evidence at protein level"/>
<comment type="disruption phenotype">
    <text evidence="2">Disruption results in the complete loss of diacyltrehalose (DAT) and polyacyltrehalose (PAT) biosynthesis.</text>
</comment>
<comment type="similarity">
    <text evidence="3">Belongs to the ATP-dependent AMP-binding enzyme family.</text>
</comment>
<organism>
    <name type="scientific">Mycobacterium tuberculosis (strain ATCC 25618 / H37Rv)</name>
    <dbReference type="NCBI Taxonomy" id="83332"/>
    <lineage>
        <taxon>Bacteria</taxon>
        <taxon>Bacillati</taxon>
        <taxon>Actinomycetota</taxon>
        <taxon>Actinomycetes</taxon>
        <taxon>Mycobacteriales</taxon>
        <taxon>Mycobacteriaceae</taxon>
        <taxon>Mycobacterium</taxon>
        <taxon>Mycobacterium tuberculosis complex</taxon>
    </lineage>
</organism>
<accession>P9WQ49</accession>
<accession>L0T5X7</accession>
<accession>O50441</accession>
<accession>P63523</accession>
<name>FAD21_MYCTU</name>
<feature type="chain" id="PRO_0000193136" description="Putative fatty-acid--CoA ligase FadD21">
    <location>
        <begin position="1"/>
        <end position="578"/>
    </location>
</feature>
<feature type="cross-link" description="Isoglutamyl lysine isopeptide (Lys-Gln) (interchain with Q-Cter in protein Pup)" evidence="1">
    <location>
        <position position="355"/>
    </location>
</feature>
<sequence>MSDSSVLSLLRERAGLQPDDAAFTYIDYEQDWAGITETLTWSEVFRRTRIVAHEVRRHCTTGDRAVILAPQGLAYIAAFLGSMQAGAIAVPLSVPQIGSHDERVSAVLADASPSVILTTSAVAEAVAEHIHRPNTNNVGPIIEIDSLDLTGNSPSFRVKDLPSAAYLQYTSGSTRAPAGVMISHRNLQANFQQLMSNYFGDRNGVAPPDTTIVSWLPFYHDMGLVLGIIAPILGGYRSELTSPLAFLQRPARWLHSLANGSPSWSAAPNFAFELAVRKTTDADIEGLDLGNVLGITSGAERVHPNTLSRFCNRFAPYNFREDMIRPSYGLAEATLYVASRNSGDKPEVVYFEPDKLSTGSANRCEPKTGTPLLSYGMPTSPTVRIVDPDTCIECPAGTIGEIWVKGDNVAEGYWNKPDETRHTFGAMLVHPSAGTPDGSWLRTGDLGFLSEDEMFIVGRMKDMLIVYGRNHYPEDIESTVQEITGGRVAAISVPVDHTEKLVTVIELKLLGDSAGEAMDELDVIKNNVTAAISRSHGLNVADLVLVPPGSIPTTTSGKIRRAACVEQYRLQQFTRLDG</sequence>
<reference key="1">
    <citation type="journal article" date="1998" name="Nature">
        <title>Deciphering the biology of Mycobacterium tuberculosis from the complete genome sequence.</title>
        <authorList>
            <person name="Cole S.T."/>
            <person name="Brosch R."/>
            <person name="Parkhill J."/>
            <person name="Garnier T."/>
            <person name="Churcher C.M."/>
            <person name="Harris D.E."/>
            <person name="Gordon S.V."/>
            <person name="Eiglmeier K."/>
            <person name="Gas S."/>
            <person name="Barry C.E. III"/>
            <person name="Tekaia F."/>
            <person name="Badcock K."/>
            <person name="Basham D."/>
            <person name="Brown D."/>
            <person name="Chillingworth T."/>
            <person name="Connor R."/>
            <person name="Davies R.M."/>
            <person name="Devlin K."/>
            <person name="Feltwell T."/>
            <person name="Gentles S."/>
            <person name="Hamlin N."/>
            <person name="Holroyd S."/>
            <person name="Hornsby T."/>
            <person name="Jagels K."/>
            <person name="Krogh A."/>
            <person name="McLean J."/>
            <person name="Moule S."/>
            <person name="Murphy L.D."/>
            <person name="Oliver S."/>
            <person name="Osborne J."/>
            <person name="Quail M.A."/>
            <person name="Rajandream M.A."/>
            <person name="Rogers J."/>
            <person name="Rutter S."/>
            <person name="Seeger K."/>
            <person name="Skelton S."/>
            <person name="Squares S."/>
            <person name="Squares R."/>
            <person name="Sulston J.E."/>
            <person name="Taylor K."/>
            <person name="Whitehead S."/>
            <person name="Barrell B.G."/>
        </authorList>
    </citation>
    <scope>NUCLEOTIDE SEQUENCE [LARGE SCALE GENOMIC DNA]</scope>
    <source>
        <strain>ATCC 25618 / H37Rv</strain>
    </source>
</reference>
<reference key="2">
    <citation type="journal article" date="2010" name="PLoS ONE">
        <title>Prokaryotic ubiquitin-like protein (Pup) proteome of Mycobacterium tuberculosis.</title>
        <authorList>
            <person name="Festa R.A."/>
            <person name="McAllister F."/>
            <person name="Pearce M.J."/>
            <person name="Mintseris J."/>
            <person name="Burns K.E."/>
            <person name="Gygi S.P."/>
            <person name="Darwin K.H."/>
        </authorList>
    </citation>
    <scope>PUPYLATION AT LYS-355</scope>
    <scope>IDENTIFICATION BY MASS SPECTROMETRY</scope>
    <source>
        <strain>ATCC 25618 / H37Rv</strain>
    </source>
</reference>
<reference key="3">
    <citation type="journal article" date="2011" name="Mol. Cell. Proteomics">
        <title>Proteogenomic analysis of Mycobacterium tuberculosis by high resolution mass spectrometry.</title>
        <authorList>
            <person name="Kelkar D.S."/>
            <person name="Kumar D."/>
            <person name="Kumar P."/>
            <person name="Balakrishnan L."/>
            <person name="Muthusamy B."/>
            <person name="Yadav A.K."/>
            <person name="Shrivastava P."/>
            <person name="Marimuthu A."/>
            <person name="Anand S."/>
            <person name="Sundaram H."/>
            <person name="Kingsbury R."/>
            <person name="Harsha H.C."/>
            <person name="Nair B."/>
            <person name="Prasad T.S."/>
            <person name="Chauhan D.S."/>
            <person name="Katoch K."/>
            <person name="Katoch V.M."/>
            <person name="Kumar P."/>
            <person name="Chaerkady R."/>
            <person name="Ramachandran S."/>
            <person name="Dash D."/>
            <person name="Pandey A."/>
        </authorList>
    </citation>
    <scope>IDENTIFICATION BY MASS SPECTROMETRY [LARGE SCALE ANALYSIS]</scope>
    <source>
        <strain>ATCC 25618 / H37Rv</strain>
    </source>
</reference>
<reference key="4">
    <citation type="journal article" date="2014" name="J. Biol. Chem.">
        <title>Biosynthesis and translocation of unsulfated acyltrehaloses in Mycobacterium tuberculosis.</title>
        <authorList>
            <person name="Belardinelli J.M."/>
            <person name="Larrouy-Maumus G."/>
            <person name="Jones V."/>
            <person name="Sorio de Carvalho L.P."/>
            <person name="McNeil M.R."/>
            <person name="Jackson M."/>
        </authorList>
    </citation>
    <scope>DISRUPTION PHENOTYPE</scope>
    <source>
        <strain>H37Rv</strain>
    </source>
</reference>
<protein>
    <recommendedName>
        <fullName>Putative fatty-acid--CoA ligase FadD21</fullName>
        <ecNumber>6.2.1.-</ecNumber>
    </recommendedName>
    <alternativeName>
        <fullName>Acyl-CoA synthetase</fullName>
    </alternativeName>
</protein>
<keyword id="KW-0276">Fatty acid metabolism</keyword>
<keyword id="KW-1017">Isopeptide bond</keyword>
<keyword id="KW-0436">Ligase</keyword>
<keyword id="KW-0443">Lipid metabolism</keyword>
<keyword id="KW-1185">Reference proteome</keyword>
<keyword id="KW-0832">Ubl conjugation</keyword>
<evidence type="ECO:0000269" key="1">
    <source>
    </source>
</evidence>
<evidence type="ECO:0000269" key="2">
    <source>
    </source>
</evidence>
<evidence type="ECO:0000305" key="3"/>